<evidence type="ECO:0000255" key="1">
    <source>
        <dbReference type="HAMAP-Rule" id="MF_00252"/>
    </source>
</evidence>
<sequence length="575" mass="66202">MNILELSEQEIIRRNSLNELRAMGIEPYPAAEYVTNAFSTDIKAEFKDDETPRQVSVAGRMMSRRIMGKASFIELQDSKGRIQVYITRDDICPGEDKEMYNTVFKRLLDLGDFIGIEGFVFRTQMGEISIHAQKLTVLAKSIKPLPIVKYKDGVTYDSFEDPELRYRQRYVDLAVNEGVKDIFIKRSKVYSSMREYFNSKGYMEVETPILQAIAGGAAARPFMTHHNALDIPLYMRIASELYLKRLIVGGFEGVYEIGKNFRNEGMDRTHNPEFTCMEIYVAYKDYNWMMEFTEKMIEKICLDVNGTTEVKVGDNIINFKAPYKRVTMLGAIKEHTGYDLTGMNEEQIREVCKKLNMEIDDTMGKGKLIDEIFGEFCEGTYIQPTFITDYPIEMSPLTKKHRDNPELTERFELMVNGKELCNAYSELNDPIDQLERFEDQMKLSEKGDDEAMIIDKDFVRALEYGMPPTSGMGIGMDRLTMLMTGQSTIQEVLFFPQMRPEKVVPKDSASKFMELGIAEEWVPVIQKAGYNQVADMKEVNPQKFHQDICGINKKYKLELTNPSVNDVAEWIQKIK</sequence>
<comment type="catalytic activity">
    <reaction evidence="1">
        <text>tRNA(Lys) + L-lysine + ATP = L-lysyl-tRNA(Lys) + AMP + diphosphate</text>
        <dbReference type="Rhea" id="RHEA:20792"/>
        <dbReference type="Rhea" id="RHEA-COMP:9696"/>
        <dbReference type="Rhea" id="RHEA-COMP:9697"/>
        <dbReference type="ChEBI" id="CHEBI:30616"/>
        <dbReference type="ChEBI" id="CHEBI:32551"/>
        <dbReference type="ChEBI" id="CHEBI:33019"/>
        <dbReference type="ChEBI" id="CHEBI:78442"/>
        <dbReference type="ChEBI" id="CHEBI:78529"/>
        <dbReference type="ChEBI" id="CHEBI:456215"/>
        <dbReference type="EC" id="6.1.1.6"/>
    </reaction>
</comment>
<comment type="cofactor">
    <cofactor evidence="1">
        <name>Mg(2+)</name>
        <dbReference type="ChEBI" id="CHEBI:18420"/>
    </cofactor>
    <text evidence="1">Binds 3 Mg(2+) ions per subunit.</text>
</comment>
<comment type="subunit">
    <text evidence="1">Homodimer.</text>
</comment>
<comment type="subcellular location">
    <subcellularLocation>
        <location evidence="1">Cytoplasm</location>
    </subcellularLocation>
</comment>
<comment type="similarity">
    <text evidence="1">Belongs to the class-II aminoacyl-tRNA synthetase family.</text>
</comment>
<accession>Q5L9E5</accession>
<proteinExistence type="inferred from homology"/>
<feature type="chain" id="PRO_1000012844" description="Lysine--tRNA ligase">
    <location>
        <begin position="1"/>
        <end position="575"/>
    </location>
</feature>
<feature type="binding site" evidence="1">
    <location>
        <position position="412"/>
    </location>
    <ligand>
        <name>Mg(2+)</name>
        <dbReference type="ChEBI" id="CHEBI:18420"/>
        <label>1</label>
    </ligand>
</feature>
<feature type="binding site" evidence="1">
    <location>
        <position position="419"/>
    </location>
    <ligand>
        <name>Mg(2+)</name>
        <dbReference type="ChEBI" id="CHEBI:18420"/>
        <label>1</label>
    </ligand>
</feature>
<feature type="binding site" evidence="1">
    <location>
        <position position="419"/>
    </location>
    <ligand>
        <name>Mg(2+)</name>
        <dbReference type="ChEBI" id="CHEBI:18420"/>
        <label>2</label>
    </ligand>
</feature>
<organism>
    <name type="scientific">Bacteroides fragilis (strain ATCC 25285 / DSM 2151 / CCUG 4856 / JCM 11019 / LMG 10263 / NCTC 9343 / Onslow / VPI 2553 / EN-2)</name>
    <dbReference type="NCBI Taxonomy" id="272559"/>
    <lineage>
        <taxon>Bacteria</taxon>
        <taxon>Pseudomonadati</taxon>
        <taxon>Bacteroidota</taxon>
        <taxon>Bacteroidia</taxon>
        <taxon>Bacteroidales</taxon>
        <taxon>Bacteroidaceae</taxon>
        <taxon>Bacteroides</taxon>
    </lineage>
</organism>
<reference key="1">
    <citation type="journal article" date="2005" name="Science">
        <title>Extensive DNA inversions in the B. fragilis genome control variable gene expression.</title>
        <authorList>
            <person name="Cerdeno-Tarraga A.-M."/>
            <person name="Patrick S."/>
            <person name="Crossman L.C."/>
            <person name="Blakely G."/>
            <person name="Abratt V."/>
            <person name="Lennard N."/>
            <person name="Poxton I."/>
            <person name="Duerden B."/>
            <person name="Harris B."/>
            <person name="Quail M.A."/>
            <person name="Barron A."/>
            <person name="Clark L."/>
            <person name="Corton C."/>
            <person name="Doggett J."/>
            <person name="Holden M.T.G."/>
            <person name="Larke N."/>
            <person name="Line A."/>
            <person name="Lord A."/>
            <person name="Norbertczak H."/>
            <person name="Ormond D."/>
            <person name="Price C."/>
            <person name="Rabbinowitsch E."/>
            <person name="Woodward J."/>
            <person name="Barrell B.G."/>
            <person name="Parkhill J."/>
        </authorList>
    </citation>
    <scope>NUCLEOTIDE SEQUENCE [LARGE SCALE GENOMIC DNA]</scope>
    <source>
        <strain>ATCC 25285 / DSM 2151 / CCUG 4856 / JCM 11019 / LMG 10263 / NCTC 9343 / Onslow / VPI 2553 / EN-2</strain>
    </source>
</reference>
<gene>
    <name evidence="1" type="primary">lysS</name>
    <name type="ordered locus">BF3602</name>
</gene>
<keyword id="KW-0030">Aminoacyl-tRNA synthetase</keyword>
<keyword id="KW-0067">ATP-binding</keyword>
<keyword id="KW-0963">Cytoplasm</keyword>
<keyword id="KW-0436">Ligase</keyword>
<keyword id="KW-0460">Magnesium</keyword>
<keyword id="KW-0479">Metal-binding</keyword>
<keyword id="KW-0547">Nucleotide-binding</keyword>
<keyword id="KW-0648">Protein biosynthesis</keyword>
<name>SYK_BACFN</name>
<protein>
    <recommendedName>
        <fullName evidence="1">Lysine--tRNA ligase</fullName>
        <ecNumber evidence="1">6.1.1.6</ecNumber>
    </recommendedName>
    <alternativeName>
        <fullName evidence="1">Lysyl-tRNA synthetase</fullName>
        <shortName evidence="1">LysRS</shortName>
    </alternativeName>
</protein>
<dbReference type="EC" id="6.1.1.6" evidence="1"/>
<dbReference type="EMBL" id="CR626927">
    <property type="protein sequence ID" value="CAH09283.1"/>
    <property type="molecule type" value="Genomic_DNA"/>
</dbReference>
<dbReference type="RefSeq" id="WP_005790897.1">
    <property type="nucleotide sequence ID" value="NZ_UFTH01000001.1"/>
</dbReference>
<dbReference type="SMR" id="Q5L9E5"/>
<dbReference type="PaxDb" id="272559-BF9343_3502"/>
<dbReference type="GeneID" id="60367297"/>
<dbReference type="KEGG" id="bfs:BF9343_3502"/>
<dbReference type="eggNOG" id="COG1190">
    <property type="taxonomic scope" value="Bacteria"/>
</dbReference>
<dbReference type="HOGENOM" id="CLU_008255_6_0_10"/>
<dbReference type="Proteomes" id="UP000006731">
    <property type="component" value="Chromosome"/>
</dbReference>
<dbReference type="GO" id="GO:0005829">
    <property type="term" value="C:cytosol"/>
    <property type="evidence" value="ECO:0007669"/>
    <property type="project" value="TreeGrafter"/>
</dbReference>
<dbReference type="GO" id="GO:0005524">
    <property type="term" value="F:ATP binding"/>
    <property type="evidence" value="ECO:0007669"/>
    <property type="project" value="UniProtKB-UniRule"/>
</dbReference>
<dbReference type="GO" id="GO:0004824">
    <property type="term" value="F:lysine-tRNA ligase activity"/>
    <property type="evidence" value="ECO:0007669"/>
    <property type="project" value="UniProtKB-UniRule"/>
</dbReference>
<dbReference type="GO" id="GO:0000287">
    <property type="term" value="F:magnesium ion binding"/>
    <property type="evidence" value="ECO:0007669"/>
    <property type="project" value="UniProtKB-UniRule"/>
</dbReference>
<dbReference type="GO" id="GO:0000049">
    <property type="term" value="F:tRNA binding"/>
    <property type="evidence" value="ECO:0007669"/>
    <property type="project" value="TreeGrafter"/>
</dbReference>
<dbReference type="GO" id="GO:0006430">
    <property type="term" value="P:lysyl-tRNA aminoacylation"/>
    <property type="evidence" value="ECO:0007669"/>
    <property type="project" value="UniProtKB-UniRule"/>
</dbReference>
<dbReference type="CDD" id="cd00775">
    <property type="entry name" value="LysRS_core"/>
    <property type="match status" value="1"/>
</dbReference>
<dbReference type="CDD" id="cd04322">
    <property type="entry name" value="LysRS_N"/>
    <property type="match status" value="1"/>
</dbReference>
<dbReference type="FunFam" id="2.40.50.140:FF:000024">
    <property type="entry name" value="Lysine--tRNA ligase"/>
    <property type="match status" value="1"/>
</dbReference>
<dbReference type="FunFam" id="3.30.930.10:FF:000238">
    <property type="entry name" value="Lysine--tRNA ligase"/>
    <property type="match status" value="1"/>
</dbReference>
<dbReference type="Gene3D" id="3.30.930.10">
    <property type="entry name" value="Bira Bifunctional Protein, Domain 2"/>
    <property type="match status" value="1"/>
</dbReference>
<dbReference type="Gene3D" id="2.40.50.140">
    <property type="entry name" value="Nucleic acid-binding proteins"/>
    <property type="match status" value="1"/>
</dbReference>
<dbReference type="HAMAP" id="MF_00252">
    <property type="entry name" value="Lys_tRNA_synth_class2"/>
    <property type="match status" value="1"/>
</dbReference>
<dbReference type="InterPro" id="IPR004364">
    <property type="entry name" value="Aa-tRNA-synt_II"/>
</dbReference>
<dbReference type="InterPro" id="IPR006195">
    <property type="entry name" value="aa-tRNA-synth_II"/>
</dbReference>
<dbReference type="InterPro" id="IPR045864">
    <property type="entry name" value="aa-tRNA-synth_II/BPL/LPL"/>
</dbReference>
<dbReference type="InterPro" id="IPR025567">
    <property type="entry name" value="DUF4332"/>
</dbReference>
<dbReference type="InterPro" id="IPR002313">
    <property type="entry name" value="Lys-tRNA-ligase_II"/>
</dbReference>
<dbReference type="InterPro" id="IPR044136">
    <property type="entry name" value="Lys-tRNA-ligase_II_N"/>
</dbReference>
<dbReference type="InterPro" id="IPR018149">
    <property type="entry name" value="Lys-tRNA-synth_II_C"/>
</dbReference>
<dbReference type="InterPro" id="IPR012340">
    <property type="entry name" value="NA-bd_OB-fold"/>
</dbReference>
<dbReference type="InterPro" id="IPR004365">
    <property type="entry name" value="NA-bd_OB_tRNA"/>
</dbReference>
<dbReference type="NCBIfam" id="TIGR00499">
    <property type="entry name" value="lysS_bact"/>
    <property type="match status" value="1"/>
</dbReference>
<dbReference type="NCBIfam" id="NF001756">
    <property type="entry name" value="PRK00484.1"/>
    <property type="match status" value="1"/>
</dbReference>
<dbReference type="PANTHER" id="PTHR42918:SF15">
    <property type="entry name" value="LYSINE--TRNA LIGASE, CHLOROPLASTIC_MITOCHONDRIAL"/>
    <property type="match status" value="1"/>
</dbReference>
<dbReference type="PANTHER" id="PTHR42918">
    <property type="entry name" value="LYSYL-TRNA SYNTHETASE"/>
    <property type="match status" value="1"/>
</dbReference>
<dbReference type="Pfam" id="PF14229">
    <property type="entry name" value="DUF4332"/>
    <property type="match status" value="1"/>
</dbReference>
<dbReference type="Pfam" id="PF00152">
    <property type="entry name" value="tRNA-synt_2"/>
    <property type="match status" value="1"/>
</dbReference>
<dbReference type="Pfam" id="PF01336">
    <property type="entry name" value="tRNA_anti-codon"/>
    <property type="match status" value="1"/>
</dbReference>
<dbReference type="PRINTS" id="PR00982">
    <property type="entry name" value="TRNASYNTHLYS"/>
</dbReference>
<dbReference type="SUPFAM" id="SSF55681">
    <property type="entry name" value="Class II aaRS and biotin synthetases"/>
    <property type="match status" value="1"/>
</dbReference>
<dbReference type="SUPFAM" id="SSF50249">
    <property type="entry name" value="Nucleic acid-binding proteins"/>
    <property type="match status" value="1"/>
</dbReference>
<dbReference type="PROSITE" id="PS50862">
    <property type="entry name" value="AA_TRNA_LIGASE_II"/>
    <property type="match status" value="1"/>
</dbReference>